<accession>A7ZYN8</accession>
<comment type="function">
    <text evidence="1">Catalyzes the desulfonation of aliphatic sulfonates.</text>
</comment>
<comment type="catalytic activity">
    <reaction evidence="1">
        <text>an alkanesulfonate + FMNH2 + O2 = an aldehyde + FMN + sulfite + H2O + 2 H(+)</text>
        <dbReference type="Rhea" id="RHEA:23064"/>
        <dbReference type="ChEBI" id="CHEBI:15377"/>
        <dbReference type="ChEBI" id="CHEBI:15378"/>
        <dbReference type="ChEBI" id="CHEBI:15379"/>
        <dbReference type="ChEBI" id="CHEBI:17359"/>
        <dbReference type="ChEBI" id="CHEBI:17478"/>
        <dbReference type="ChEBI" id="CHEBI:57618"/>
        <dbReference type="ChEBI" id="CHEBI:58210"/>
        <dbReference type="ChEBI" id="CHEBI:134249"/>
        <dbReference type="EC" id="1.14.14.5"/>
    </reaction>
</comment>
<comment type="subunit">
    <text evidence="1">Homotetramer.</text>
</comment>
<comment type="miscellaneous">
    <text evidence="1">FMNH(2) which is absolutely required for this enzymatic reaction, is provided by SsuE.</text>
</comment>
<comment type="similarity">
    <text evidence="1">Belongs to the SsuD family.</text>
</comment>
<keyword id="KW-0285">Flavoprotein</keyword>
<keyword id="KW-0288">FMN</keyword>
<keyword id="KW-0503">Monooxygenase</keyword>
<keyword id="KW-0560">Oxidoreductase</keyword>
<reference key="1">
    <citation type="journal article" date="2008" name="J. Bacteriol.">
        <title>The pangenome structure of Escherichia coli: comparative genomic analysis of E. coli commensal and pathogenic isolates.</title>
        <authorList>
            <person name="Rasko D.A."/>
            <person name="Rosovitz M.J."/>
            <person name="Myers G.S.A."/>
            <person name="Mongodin E.F."/>
            <person name="Fricke W.F."/>
            <person name="Gajer P."/>
            <person name="Crabtree J."/>
            <person name="Sebaihia M."/>
            <person name="Thomson N.R."/>
            <person name="Chaudhuri R."/>
            <person name="Henderson I.R."/>
            <person name="Sperandio V."/>
            <person name="Ravel J."/>
        </authorList>
    </citation>
    <scope>NUCLEOTIDE SEQUENCE [LARGE SCALE GENOMIC DNA]</scope>
    <source>
        <strain>HS</strain>
    </source>
</reference>
<organism>
    <name type="scientific">Escherichia coli O9:H4 (strain HS)</name>
    <dbReference type="NCBI Taxonomy" id="331112"/>
    <lineage>
        <taxon>Bacteria</taxon>
        <taxon>Pseudomonadati</taxon>
        <taxon>Pseudomonadota</taxon>
        <taxon>Gammaproteobacteria</taxon>
        <taxon>Enterobacterales</taxon>
        <taxon>Enterobacteriaceae</taxon>
        <taxon>Escherichia</taxon>
    </lineage>
</organism>
<sequence>MSLNMFWFLPTHGDGHYLGTEEGSRPVDHGYLQQIAQAADRLGYTGVLIPTGRSCEDAWLVAASMIPVTQRLKFLVALRPSVTSPTVAARQAATLDRLSNGRALFNLVTGSDPQELAGDGVFLDHSERYEASAEFTQVWRRLLQRETVDFNGKHIHVRGAKLLFPAIQQPYPPLYFGGSSDVAQELAAEQVDLYLTWGEPPELVKEKIEQVRAKAAAHGRKIRFGIRLHVIVRETNDEAWQAAERLISHLDDETIAKAQAAFARTDSVGQQRMAALHNGKRDNLEISPNLWAGVGLVRGGAGTALVGDGPTVAARINEYAALGIDSFVLSGYPHLEEAYRVGELLFPLLDVAIPEIPQPQPLNPQGEAVANDFIPRKVAQS</sequence>
<evidence type="ECO:0000255" key="1">
    <source>
        <dbReference type="HAMAP-Rule" id="MF_01229"/>
    </source>
</evidence>
<proteinExistence type="inferred from homology"/>
<protein>
    <recommendedName>
        <fullName evidence="1">Alkanesulfonate monooxygenase</fullName>
        <ecNumber evidence="1">1.14.14.5</ecNumber>
    </recommendedName>
    <alternativeName>
        <fullName evidence="1">FMNH2-dependent aliphatic sulfonate monooxygenase</fullName>
    </alternativeName>
</protein>
<dbReference type="EC" id="1.14.14.5" evidence="1"/>
<dbReference type="EMBL" id="CP000802">
    <property type="protein sequence ID" value="ABV05392.1"/>
    <property type="molecule type" value="Genomic_DNA"/>
</dbReference>
<dbReference type="RefSeq" id="WP_000056006.1">
    <property type="nucleotide sequence ID" value="NC_009800.1"/>
</dbReference>
<dbReference type="SMR" id="A7ZYN8"/>
<dbReference type="KEGG" id="ecx:EcHS_A1044"/>
<dbReference type="HOGENOM" id="CLU_027853_1_0_6"/>
<dbReference type="GO" id="GO:0008726">
    <property type="term" value="F:alkanesulfonate monooxygenase activity"/>
    <property type="evidence" value="ECO:0007669"/>
    <property type="project" value="UniProtKB-UniRule"/>
</dbReference>
<dbReference type="GO" id="GO:0046306">
    <property type="term" value="P:alkanesulfonate catabolic process"/>
    <property type="evidence" value="ECO:0007669"/>
    <property type="project" value="TreeGrafter"/>
</dbReference>
<dbReference type="CDD" id="cd01094">
    <property type="entry name" value="Alkanesulfonate_monoxygenase"/>
    <property type="match status" value="1"/>
</dbReference>
<dbReference type="FunFam" id="3.20.20.30:FF:000001">
    <property type="entry name" value="Alkanesulfonate monooxygenase"/>
    <property type="match status" value="1"/>
</dbReference>
<dbReference type="Gene3D" id="3.20.20.30">
    <property type="entry name" value="Luciferase-like domain"/>
    <property type="match status" value="1"/>
</dbReference>
<dbReference type="HAMAP" id="MF_01229">
    <property type="entry name" value="Alkanesulf_monooxygen"/>
    <property type="match status" value="1"/>
</dbReference>
<dbReference type="InterPro" id="IPR019911">
    <property type="entry name" value="Alkanesulphonate_mOase_FMN-dep"/>
</dbReference>
<dbReference type="InterPro" id="IPR011251">
    <property type="entry name" value="Luciferase-like_dom"/>
</dbReference>
<dbReference type="InterPro" id="IPR036661">
    <property type="entry name" value="Luciferase-like_sf"/>
</dbReference>
<dbReference type="InterPro" id="IPR050172">
    <property type="entry name" value="SsuD_RutA_monooxygenase"/>
</dbReference>
<dbReference type="NCBIfam" id="TIGR03565">
    <property type="entry name" value="alk_sulf_monoox"/>
    <property type="match status" value="1"/>
</dbReference>
<dbReference type="NCBIfam" id="NF001939">
    <property type="entry name" value="PRK00719.1"/>
    <property type="match status" value="1"/>
</dbReference>
<dbReference type="PANTHER" id="PTHR42847">
    <property type="entry name" value="ALKANESULFONATE MONOOXYGENASE"/>
    <property type="match status" value="1"/>
</dbReference>
<dbReference type="PANTHER" id="PTHR42847:SF4">
    <property type="entry name" value="ALKANESULFONATE MONOOXYGENASE-RELATED"/>
    <property type="match status" value="1"/>
</dbReference>
<dbReference type="Pfam" id="PF00296">
    <property type="entry name" value="Bac_luciferase"/>
    <property type="match status" value="1"/>
</dbReference>
<dbReference type="SUPFAM" id="SSF51679">
    <property type="entry name" value="Bacterial luciferase-like"/>
    <property type="match status" value="1"/>
</dbReference>
<gene>
    <name evidence="1" type="primary">ssuD</name>
    <name type="ordered locus">EcHS_A1044</name>
</gene>
<name>SSUD_ECOHS</name>
<feature type="chain" id="PRO_1000066820" description="Alkanesulfonate monooxygenase">
    <location>
        <begin position="1"/>
        <end position="381"/>
    </location>
</feature>